<organism>
    <name type="scientific">Hyperthermus butylicus (strain DSM 5456 / JCM 9403 / PLM1-5)</name>
    <dbReference type="NCBI Taxonomy" id="415426"/>
    <lineage>
        <taxon>Archaea</taxon>
        <taxon>Thermoproteota</taxon>
        <taxon>Thermoprotei</taxon>
        <taxon>Desulfurococcales</taxon>
        <taxon>Pyrodictiaceae</taxon>
        <taxon>Hyperthermus</taxon>
    </lineage>
</organism>
<keyword id="KW-0030">Aminoacyl-tRNA synthetase</keyword>
<keyword id="KW-0067">ATP-binding</keyword>
<keyword id="KW-0963">Cytoplasm</keyword>
<keyword id="KW-0436">Ligase</keyword>
<keyword id="KW-0479">Metal-binding</keyword>
<keyword id="KW-0547">Nucleotide-binding</keyword>
<keyword id="KW-0648">Protein biosynthesis</keyword>
<keyword id="KW-1185">Reference proteome</keyword>
<keyword id="KW-0694">RNA-binding</keyword>
<keyword id="KW-0820">tRNA-binding</keyword>
<keyword id="KW-0862">Zinc</keyword>
<protein>
    <recommendedName>
        <fullName evidence="1">Alanine--tRNA ligase</fullName>
        <ecNumber evidence="1">6.1.1.7</ecNumber>
    </recommendedName>
    <alternativeName>
        <fullName evidence="1">Alanyl-tRNA synthetase</fullName>
        <shortName evidence="1">AlaRS</shortName>
    </alternativeName>
</protein>
<accession>A2BN65</accession>
<comment type="function">
    <text evidence="1">Catalyzes the attachment of alanine to tRNA(Ala) in a two-step reaction: alanine is first activated by ATP to form Ala-AMP and then transferred to the acceptor end of tRNA(Ala). Also edits incorrectly charged Ser-tRNA(Ala) and Gly-tRNA(Ala) via its editing domain.</text>
</comment>
<comment type="catalytic activity">
    <reaction evidence="1">
        <text>tRNA(Ala) + L-alanine + ATP = L-alanyl-tRNA(Ala) + AMP + diphosphate</text>
        <dbReference type="Rhea" id="RHEA:12540"/>
        <dbReference type="Rhea" id="RHEA-COMP:9657"/>
        <dbReference type="Rhea" id="RHEA-COMP:9923"/>
        <dbReference type="ChEBI" id="CHEBI:30616"/>
        <dbReference type="ChEBI" id="CHEBI:33019"/>
        <dbReference type="ChEBI" id="CHEBI:57972"/>
        <dbReference type="ChEBI" id="CHEBI:78442"/>
        <dbReference type="ChEBI" id="CHEBI:78497"/>
        <dbReference type="ChEBI" id="CHEBI:456215"/>
        <dbReference type="EC" id="6.1.1.7"/>
    </reaction>
</comment>
<comment type="cofactor">
    <cofactor evidence="1">
        <name>Zn(2+)</name>
        <dbReference type="ChEBI" id="CHEBI:29105"/>
    </cofactor>
    <text evidence="1">Binds 1 zinc ion per subunit.</text>
</comment>
<comment type="subcellular location">
    <subcellularLocation>
        <location evidence="1">Cytoplasm</location>
    </subcellularLocation>
</comment>
<comment type="domain">
    <text evidence="1">Consists of three domains; the N-terminal catalytic domain, the editing domain and the C-terminal C-Ala domain. The editing domain removes incorrectly charged amino acids, while the C-Ala domain, along with tRNA(Ala), serves as a bridge to cooperatively bring together the editing and aminoacylation centers thus stimulating deacylation of misacylated tRNAs.</text>
</comment>
<comment type="similarity">
    <text evidence="1">Belongs to the class-II aminoacyl-tRNA synthetase family.</text>
</comment>
<proteinExistence type="inferred from homology"/>
<sequence>MKLDPKVYQLEFFREKGFTRKQCRVCGEYFWTLNPDQEHCNDAPCVEYYFWELPRVRGLSVRDARRKFIEFFKRHGHEYVEPRPVVARWREDLYLTIASIVAFQPHVTSGIVPPPANPLVIVQPCIRLEDIDFVGLTIGRHLTSFEMGGHHAFNYPDKTVYWKEETVRFAFEFFTKELGIPEDMVTFKESWWEGGGNAGPSFEVTVGGLELATLVFMQYRVVDGKYEPMDIRVVDTGYGIERIAWFSQDVPTAFHAIYGELLDEFRKLLGVAEPPRELLWGAARAAGRLDPEDPESVERYYQVVAERAGLSIREARELLGREAALYTLLDHTKTIALMLGDGIVPSNTGEGYLARLVIRRALRTLRRLGADIELAVLVERQARYWGADYYPRLLSHLDYILRVVRLEEERYSKTLERGLREVTKLLKRKKKLSIDDLITLYDSHGVPPDMVAEAASKLGVNVDVPHNFYALVAKKHGASGAVAREVEEKPKLPRDIEEWARGFPATRRLFHENPYAREFTANLLGVRGSHVILDATLFYPTGGGQLHDTGVLRLCGEEYRVLRVEKVGDVVVHVLDREPSCSSGEAWGRIDWDRRYRLMRHHTAVHVLLGAARRVLGDHVWQAGAEKTPEKARLDITHYELPSREEIRKIEELANSAILARIHVDIEEIDRNTAEKLYGFRIYQGGVPMTPRLRIVRIGDWDVEACFGTHVANTAEIGAIKIVNVEKLQDGVVRFEIVAGSEVARYAASLEDKLDTIASIVGGGRGEAVKRVEKLAEELKEAKRQVSRLRSFLADMLVKSVKATAKSIDGVKVYVMTEELPDENIYREVMLKLSREEPDSITIAVIRRGEDLLMEIGAGSKAAKRVDLRAVAKQLASKGLRGGGKPSHITLYGRGLAEKASKVASEVVEVIASLVSRAGTA</sequence>
<evidence type="ECO:0000255" key="1">
    <source>
        <dbReference type="HAMAP-Rule" id="MF_00036"/>
    </source>
</evidence>
<feature type="chain" id="PRO_0000347880" description="Alanine--tRNA ligase">
    <location>
        <begin position="1"/>
        <end position="921"/>
    </location>
</feature>
<feature type="binding site" evidence="1">
    <location>
        <position position="602"/>
    </location>
    <ligand>
        <name>Zn(2+)</name>
        <dbReference type="ChEBI" id="CHEBI:29105"/>
    </ligand>
</feature>
<feature type="binding site" evidence="1">
    <location>
        <position position="606"/>
    </location>
    <ligand>
        <name>Zn(2+)</name>
        <dbReference type="ChEBI" id="CHEBI:29105"/>
    </ligand>
</feature>
<feature type="binding site" evidence="1">
    <location>
        <position position="706"/>
    </location>
    <ligand>
        <name>Zn(2+)</name>
        <dbReference type="ChEBI" id="CHEBI:29105"/>
    </ligand>
</feature>
<feature type="binding site" evidence="1">
    <location>
        <position position="710"/>
    </location>
    <ligand>
        <name>Zn(2+)</name>
        <dbReference type="ChEBI" id="CHEBI:29105"/>
    </ligand>
</feature>
<gene>
    <name evidence="1" type="primary">alaS</name>
    <name type="ordered locus">Hbut_1607</name>
</gene>
<dbReference type="EC" id="6.1.1.7" evidence="1"/>
<dbReference type="EMBL" id="CP000493">
    <property type="protein sequence ID" value="ABM81426.1"/>
    <property type="molecule type" value="Genomic_DNA"/>
</dbReference>
<dbReference type="RefSeq" id="WP_011822744.1">
    <property type="nucleotide sequence ID" value="NC_008818.1"/>
</dbReference>
<dbReference type="SMR" id="A2BN65"/>
<dbReference type="STRING" id="415426.Hbut_1607"/>
<dbReference type="EnsemblBacteria" id="ABM81426">
    <property type="protein sequence ID" value="ABM81426"/>
    <property type="gene ID" value="Hbut_1607"/>
</dbReference>
<dbReference type="GeneID" id="4781445"/>
<dbReference type="KEGG" id="hbu:Hbut_1607"/>
<dbReference type="eggNOG" id="arCOG01255">
    <property type="taxonomic scope" value="Archaea"/>
</dbReference>
<dbReference type="HOGENOM" id="CLU_004485_4_0_2"/>
<dbReference type="OrthoDB" id="7506at2157"/>
<dbReference type="Proteomes" id="UP000002593">
    <property type="component" value="Chromosome"/>
</dbReference>
<dbReference type="GO" id="GO:0005737">
    <property type="term" value="C:cytoplasm"/>
    <property type="evidence" value="ECO:0007669"/>
    <property type="project" value="UniProtKB-SubCell"/>
</dbReference>
<dbReference type="GO" id="GO:0004813">
    <property type="term" value="F:alanine-tRNA ligase activity"/>
    <property type="evidence" value="ECO:0007669"/>
    <property type="project" value="UniProtKB-UniRule"/>
</dbReference>
<dbReference type="GO" id="GO:0002161">
    <property type="term" value="F:aminoacyl-tRNA deacylase activity"/>
    <property type="evidence" value="ECO:0007669"/>
    <property type="project" value="TreeGrafter"/>
</dbReference>
<dbReference type="GO" id="GO:0005524">
    <property type="term" value="F:ATP binding"/>
    <property type="evidence" value="ECO:0007669"/>
    <property type="project" value="UniProtKB-UniRule"/>
</dbReference>
<dbReference type="GO" id="GO:0000049">
    <property type="term" value="F:tRNA binding"/>
    <property type="evidence" value="ECO:0007669"/>
    <property type="project" value="UniProtKB-KW"/>
</dbReference>
<dbReference type="GO" id="GO:0008270">
    <property type="term" value="F:zinc ion binding"/>
    <property type="evidence" value="ECO:0007669"/>
    <property type="project" value="UniProtKB-UniRule"/>
</dbReference>
<dbReference type="GO" id="GO:0006419">
    <property type="term" value="P:alanyl-tRNA aminoacylation"/>
    <property type="evidence" value="ECO:0007669"/>
    <property type="project" value="UniProtKB-UniRule"/>
</dbReference>
<dbReference type="CDD" id="cd00673">
    <property type="entry name" value="AlaRS_core"/>
    <property type="match status" value="1"/>
</dbReference>
<dbReference type="FunFam" id="3.30.930.10:FF:000056">
    <property type="entry name" value="Alanine--tRNA ligase"/>
    <property type="match status" value="1"/>
</dbReference>
<dbReference type="FunFam" id="3.30.980.10:FF:000004">
    <property type="entry name" value="Alanine--tRNA ligase, cytoplasmic"/>
    <property type="match status" value="1"/>
</dbReference>
<dbReference type="Gene3D" id="2.40.30.130">
    <property type="match status" value="1"/>
</dbReference>
<dbReference type="Gene3D" id="3.30.54.20">
    <property type="match status" value="1"/>
</dbReference>
<dbReference type="Gene3D" id="6.10.250.550">
    <property type="match status" value="1"/>
</dbReference>
<dbReference type="Gene3D" id="3.30.930.10">
    <property type="entry name" value="Bira Bifunctional Protein, Domain 2"/>
    <property type="match status" value="1"/>
</dbReference>
<dbReference type="Gene3D" id="3.30.980.10">
    <property type="entry name" value="Threonyl-trna Synthetase, Chain A, domain 2"/>
    <property type="match status" value="1"/>
</dbReference>
<dbReference type="HAMAP" id="MF_00036_A">
    <property type="entry name" value="Ala_tRNA_synth_A"/>
    <property type="match status" value="1"/>
</dbReference>
<dbReference type="InterPro" id="IPR045864">
    <property type="entry name" value="aa-tRNA-synth_II/BPL/LPL"/>
</dbReference>
<dbReference type="InterPro" id="IPR002318">
    <property type="entry name" value="Ala-tRNA-lgiase_IIc"/>
</dbReference>
<dbReference type="InterPro" id="IPR018162">
    <property type="entry name" value="Ala-tRNA-ligase_IIc_anticod-bd"/>
</dbReference>
<dbReference type="InterPro" id="IPR018165">
    <property type="entry name" value="Ala-tRNA-synth_IIc_core"/>
</dbReference>
<dbReference type="InterPro" id="IPR018164">
    <property type="entry name" value="Ala-tRNA-synth_IIc_N"/>
</dbReference>
<dbReference type="InterPro" id="IPR022429">
    <property type="entry name" value="Ala-tRNA_lgiase_arc"/>
</dbReference>
<dbReference type="InterPro" id="IPR050058">
    <property type="entry name" value="Ala-tRNA_ligase"/>
</dbReference>
<dbReference type="InterPro" id="IPR018163">
    <property type="entry name" value="Thr/Ala-tRNA-synth_IIc_edit"/>
</dbReference>
<dbReference type="InterPro" id="IPR009000">
    <property type="entry name" value="Transl_B-barrel_sf"/>
</dbReference>
<dbReference type="InterPro" id="IPR012947">
    <property type="entry name" value="tRNA_SAD"/>
</dbReference>
<dbReference type="NCBIfam" id="TIGR03683">
    <property type="entry name" value="A-tRNA_syn_arch"/>
    <property type="match status" value="1"/>
</dbReference>
<dbReference type="NCBIfam" id="TIGR00344">
    <property type="entry name" value="alaS"/>
    <property type="match status" value="1"/>
</dbReference>
<dbReference type="PANTHER" id="PTHR11777:SF9">
    <property type="entry name" value="ALANINE--TRNA LIGASE, CYTOPLASMIC"/>
    <property type="match status" value="1"/>
</dbReference>
<dbReference type="PANTHER" id="PTHR11777">
    <property type="entry name" value="ALANYL-TRNA SYNTHETASE"/>
    <property type="match status" value="1"/>
</dbReference>
<dbReference type="Pfam" id="PF01411">
    <property type="entry name" value="tRNA-synt_2c"/>
    <property type="match status" value="1"/>
</dbReference>
<dbReference type="Pfam" id="PF07973">
    <property type="entry name" value="tRNA_SAD"/>
    <property type="match status" value="1"/>
</dbReference>
<dbReference type="PRINTS" id="PR00980">
    <property type="entry name" value="TRNASYNTHALA"/>
</dbReference>
<dbReference type="SMART" id="SM00863">
    <property type="entry name" value="tRNA_SAD"/>
    <property type="match status" value="1"/>
</dbReference>
<dbReference type="SUPFAM" id="SSF55681">
    <property type="entry name" value="Class II aaRS and biotin synthetases"/>
    <property type="match status" value="1"/>
</dbReference>
<dbReference type="SUPFAM" id="SSF101353">
    <property type="entry name" value="Putative anticodon-binding domain of alanyl-tRNA synthetase (AlaRS)"/>
    <property type="match status" value="1"/>
</dbReference>
<dbReference type="SUPFAM" id="SSF55186">
    <property type="entry name" value="ThrRS/AlaRS common domain"/>
    <property type="match status" value="1"/>
</dbReference>
<dbReference type="SUPFAM" id="SSF50447">
    <property type="entry name" value="Translation proteins"/>
    <property type="match status" value="1"/>
</dbReference>
<dbReference type="PROSITE" id="PS50860">
    <property type="entry name" value="AA_TRNA_LIGASE_II_ALA"/>
    <property type="match status" value="1"/>
</dbReference>
<name>SYA_HYPBU</name>
<reference key="1">
    <citation type="journal article" date="2007" name="Archaea">
        <title>The genome of Hyperthermus butylicus: a sulfur-reducing, peptide fermenting, neutrophilic Crenarchaeote growing up to 108 degrees C.</title>
        <authorList>
            <person name="Bruegger K."/>
            <person name="Chen L."/>
            <person name="Stark M."/>
            <person name="Zibat A."/>
            <person name="Redder P."/>
            <person name="Ruepp A."/>
            <person name="Awayez M."/>
            <person name="She Q."/>
            <person name="Garrett R.A."/>
            <person name="Klenk H.-P."/>
        </authorList>
    </citation>
    <scope>NUCLEOTIDE SEQUENCE [LARGE SCALE GENOMIC DNA]</scope>
    <source>
        <strain>DSM 5456 / JCM 9403 / PLM1-5</strain>
    </source>
</reference>